<evidence type="ECO:0000255" key="1">
    <source>
        <dbReference type="HAMAP-Rule" id="MF_00171"/>
    </source>
</evidence>
<keyword id="KW-0413">Isomerase</keyword>
<keyword id="KW-1185">Reference proteome</keyword>
<keyword id="KW-0819">tRNA processing</keyword>
<dbReference type="EC" id="5.4.99.12" evidence="1"/>
<dbReference type="EMBL" id="AE016822">
    <property type="protein sequence ID" value="AAT89719.1"/>
    <property type="molecule type" value="Genomic_DNA"/>
</dbReference>
<dbReference type="RefSeq" id="WP_011186705.1">
    <property type="nucleotide sequence ID" value="NC_006087.1"/>
</dbReference>
<dbReference type="SMR" id="Q6AD25"/>
<dbReference type="STRING" id="281090.Lxx20040"/>
<dbReference type="KEGG" id="lxx:Lxx20040"/>
<dbReference type="eggNOG" id="COG0101">
    <property type="taxonomic scope" value="Bacteria"/>
</dbReference>
<dbReference type="HOGENOM" id="CLU_014673_0_2_11"/>
<dbReference type="Proteomes" id="UP000001306">
    <property type="component" value="Chromosome"/>
</dbReference>
<dbReference type="GO" id="GO:0003723">
    <property type="term" value="F:RNA binding"/>
    <property type="evidence" value="ECO:0007669"/>
    <property type="project" value="InterPro"/>
</dbReference>
<dbReference type="GO" id="GO:0160147">
    <property type="term" value="F:tRNA pseudouridine(38-40) synthase activity"/>
    <property type="evidence" value="ECO:0007669"/>
    <property type="project" value="UniProtKB-EC"/>
</dbReference>
<dbReference type="GO" id="GO:0031119">
    <property type="term" value="P:tRNA pseudouridine synthesis"/>
    <property type="evidence" value="ECO:0007669"/>
    <property type="project" value="UniProtKB-UniRule"/>
</dbReference>
<dbReference type="CDD" id="cd02570">
    <property type="entry name" value="PseudoU_synth_EcTruA"/>
    <property type="match status" value="1"/>
</dbReference>
<dbReference type="Gene3D" id="3.30.70.660">
    <property type="entry name" value="Pseudouridine synthase I, catalytic domain, C-terminal subdomain"/>
    <property type="match status" value="1"/>
</dbReference>
<dbReference type="Gene3D" id="3.30.70.580">
    <property type="entry name" value="Pseudouridine synthase I, catalytic domain, N-terminal subdomain"/>
    <property type="match status" value="1"/>
</dbReference>
<dbReference type="HAMAP" id="MF_00171">
    <property type="entry name" value="TruA"/>
    <property type="match status" value="1"/>
</dbReference>
<dbReference type="InterPro" id="IPR020103">
    <property type="entry name" value="PsdUridine_synth_cat_dom_sf"/>
</dbReference>
<dbReference type="InterPro" id="IPR001406">
    <property type="entry name" value="PsdUridine_synth_TruA"/>
</dbReference>
<dbReference type="InterPro" id="IPR020097">
    <property type="entry name" value="PsdUridine_synth_TruA_a/b_dom"/>
</dbReference>
<dbReference type="InterPro" id="IPR020095">
    <property type="entry name" value="PsdUridine_synth_TruA_C"/>
</dbReference>
<dbReference type="InterPro" id="IPR020094">
    <property type="entry name" value="TruA/RsuA/RluB/E/F_N"/>
</dbReference>
<dbReference type="NCBIfam" id="TIGR00071">
    <property type="entry name" value="hisT_truA"/>
    <property type="match status" value="1"/>
</dbReference>
<dbReference type="PANTHER" id="PTHR11142">
    <property type="entry name" value="PSEUDOURIDYLATE SYNTHASE"/>
    <property type="match status" value="1"/>
</dbReference>
<dbReference type="PANTHER" id="PTHR11142:SF0">
    <property type="entry name" value="TRNA PSEUDOURIDINE SYNTHASE-LIKE 1"/>
    <property type="match status" value="1"/>
</dbReference>
<dbReference type="Pfam" id="PF01416">
    <property type="entry name" value="PseudoU_synth_1"/>
    <property type="match status" value="1"/>
</dbReference>
<dbReference type="PIRSF" id="PIRSF001430">
    <property type="entry name" value="tRNA_psdUrid_synth"/>
    <property type="match status" value="1"/>
</dbReference>
<dbReference type="SUPFAM" id="SSF55120">
    <property type="entry name" value="Pseudouridine synthase"/>
    <property type="match status" value="1"/>
</dbReference>
<name>TRUA_LEIXX</name>
<comment type="function">
    <text evidence="1">Formation of pseudouridine at positions 38, 39 and 40 in the anticodon stem and loop of transfer RNAs.</text>
</comment>
<comment type="catalytic activity">
    <reaction evidence="1">
        <text>uridine(38/39/40) in tRNA = pseudouridine(38/39/40) in tRNA</text>
        <dbReference type="Rhea" id="RHEA:22376"/>
        <dbReference type="Rhea" id="RHEA-COMP:10085"/>
        <dbReference type="Rhea" id="RHEA-COMP:10087"/>
        <dbReference type="ChEBI" id="CHEBI:65314"/>
        <dbReference type="ChEBI" id="CHEBI:65315"/>
        <dbReference type="EC" id="5.4.99.12"/>
    </reaction>
</comment>
<comment type="subunit">
    <text evidence="1">Homodimer.</text>
</comment>
<comment type="similarity">
    <text evidence="1">Belongs to the tRNA pseudouridine synthase TruA family.</text>
</comment>
<gene>
    <name evidence="1" type="primary">truA</name>
    <name type="ordered locus">Lxx20040</name>
</gene>
<accession>Q6AD25</accession>
<proteinExistence type="inferred from homology"/>
<protein>
    <recommendedName>
        <fullName evidence="1">tRNA pseudouridine synthase A</fullName>
        <ecNumber evidence="1">5.4.99.12</ecNumber>
    </recommendedName>
    <alternativeName>
        <fullName evidence="1">tRNA pseudouridine(38-40) synthase</fullName>
    </alternativeName>
    <alternativeName>
        <fullName evidence="1">tRNA pseudouridylate synthase I</fullName>
    </alternativeName>
    <alternativeName>
        <fullName evidence="1">tRNA-uridine isomerase I</fullName>
    </alternativeName>
</protein>
<feature type="chain" id="PRO_0000057400" description="tRNA pseudouridine synthase A">
    <location>
        <begin position="1"/>
        <end position="288"/>
    </location>
</feature>
<feature type="active site" description="Nucleophile" evidence="1">
    <location>
        <position position="59"/>
    </location>
</feature>
<feature type="binding site" evidence="1">
    <location>
        <position position="134"/>
    </location>
    <ligand>
        <name>substrate</name>
    </ligand>
</feature>
<sequence length="288" mass="31786">MTDQATRFRLDIAYQGTDFAGWARQPDLRTVQGTLEEALATIFRCSGEPPSLTVAGRTDAGVHATGQVAHVDLSPEQVALLRRPHGKREPQLAHDALKRRVNGVLGPVPDVLVSRATEAPAGFDARFSALWRRYEYRVADRIALRDPLQRHRTAWVPNTLDVDAMDRGAHGMLGLHDFASYCKAREGATTIRTLQAFSWRRDAEGVLLGEVAADAFCHSMVRALVGACVEVGEGKLRPGDLVTLRDERQRTSAFKVMPARGLTLREVGYPVDAELGRRAEQTRGLRTL</sequence>
<organism>
    <name type="scientific">Leifsonia xyli subsp. xyli (strain CTCB07)</name>
    <dbReference type="NCBI Taxonomy" id="281090"/>
    <lineage>
        <taxon>Bacteria</taxon>
        <taxon>Bacillati</taxon>
        <taxon>Actinomycetota</taxon>
        <taxon>Actinomycetes</taxon>
        <taxon>Micrococcales</taxon>
        <taxon>Microbacteriaceae</taxon>
        <taxon>Leifsonia</taxon>
    </lineage>
</organism>
<reference key="1">
    <citation type="journal article" date="2004" name="Mol. Plant Microbe Interact.">
        <title>The genome sequence of the Gram-positive sugarcane pathogen Leifsonia xyli subsp. xyli.</title>
        <authorList>
            <person name="Monteiro-Vitorello C.B."/>
            <person name="Camargo L.E.A."/>
            <person name="Van Sluys M.A."/>
            <person name="Kitajima J.P."/>
            <person name="Truffi D."/>
            <person name="do Amaral A.M."/>
            <person name="Harakava R."/>
            <person name="de Oliveira J.C.F."/>
            <person name="Wood D."/>
            <person name="de Oliveira M.C."/>
            <person name="Miyaki C.Y."/>
            <person name="Takita M.A."/>
            <person name="da Silva A.C.R."/>
            <person name="Furlan L.R."/>
            <person name="Carraro D.M."/>
            <person name="Camarotte G."/>
            <person name="Almeida N.F. Jr."/>
            <person name="Carrer H."/>
            <person name="Coutinho L.L."/>
            <person name="El-Dorry H.A."/>
            <person name="Ferro M.I.T."/>
            <person name="Gagliardi P.R."/>
            <person name="Giglioti E."/>
            <person name="Goldman M.H.S."/>
            <person name="Goldman G.H."/>
            <person name="Kimura E.T."/>
            <person name="Ferro E.S."/>
            <person name="Kuramae E.E."/>
            <person name="Lemos E.G.M."/>
            <person name="Lemos M.V.F."/>
            <person name="Mauro S.M.Z."/>
            <person name="Machado M.A."/>
            <person name="Marino C.L."/>
            <person name="Menck C.F."/>
            <person name="Nunes L.R."/>
            <person name="Oliveira R.C."/>
            <person name="Pereira G.G."/>
            <person name="Siqueira W."/>
            <person name="de Souza A.A."/>
            <person name="Tsai S.M."/>
            <person name="Zanca A.S."/>
            <person name="Simpson A.J.G."/>
            <person name="Brumbley S.M."/>
            <person name="Setubal J.C."/>
        </authorList>
    </citation>
    <scope>NUCLEOTIDE SEQUENCE [LARGE SCALE GENOMIC DNA]</scope>
    <source>
        <strain>CTCB07</strain>
    </source>
</reference>